<reference key="1">
    <citation type="journal article" date="2002" name="Nature">
        <title>Comparison of the genomes of two Xanthomonas pathogens with differing host specificities.</title>
        <authorList>
            <person name="da Silva A.C.R."/>
            <person name="Ferro J.A."/>
            <person name="Reinach F.C."/>
            <person name="Farah C.S."/>
            <person name="Furlan L.R."/>
            <person name="Quaggio R.B."/>
            <person name="Monteiro-Vitorello C.B."/>
            <person name="Van Sluys M.A."/>
            <person name="Almeida N.F. Jr."/>
            <person name="Alves L.M.C."/>
            <person name="do Amaral A.M."/>
            <person name="Bertolini M.C."/>
            <person name="Camargo L.E.A."/>
            <person name="Camarotte G."/>
            <person name="Cannavan F."/>
            <person name="Cardozo J."/>
            <person name="Chambergo F."/>
            <person name="Ciapina L.P."/>
            <person name="Cicarelli R.M.B."/>
            <person name="Coutinho L.L."/>
            <person name="Cursino-Santos J.R."/>
            <person name="El-Dorry H."/>
            <person name="Faria J.B."/>
            <person name="Ferreira A.J.S."/>
            <person name="Ferreira R.C.C."/>
            <person name="Ferro M.I.T."/>
            <person name="Formighieri E.F."/>
            <person name="Franco M.C."/>
            <person name="Greggio C.C."/>
            <person name="Gruber A."/>
            <person name="Katsuyama A.M."/>
            <person name="Kishi L.T."/>
            <person name="Leite R.P."/>
            <person name="Lemos E.G.M."/>
            <person name="Lemos M.V.F."/>
            <person name="Locali E.C."/>
            <person name="Machado M.A."/>
            <person name="Madeira A.M.B.N."/>
            <person name="Martinez-Rossi N.M."/>
            <person name="Martins E.C."/>
            <person name="Meidanis J."/>
            <person name="Menck C.F.M."/>
            <person name="Miyaki C.Y."/>
            <person name="Moon D.H."/>
            <person name="Moreira L.M."/>
            <person name="Novo M.T.M."/>
            <person name="Okura V.K."/>
            <person name="Oliveira M.C."/>
            <person name="Oliveira V.R."/>
            <person name="Pereira H.A."/>
            <person name="Rossi A."/>
            <person name="Sena J.A.D."/>
            <person name="Silva C."/>
            <person name="de Souza R.F."/>
            <person name="Spinola L.A.F."/>
            <person name="Takita M.A."/>
            <person name="Tamura R.E."/>
            <person name="Teixeira E.C."/>
            <person name="Tezza R.I.D."/>
            <person name="Trindade dos Santos M."/>
            <person name="Truffi D."/>
            <person name="Tsai S.M."/>
            <person name="White F.F."/>
            <person name="Setubal J.C."/>
            <person name="Kitajima J.P."/>
        </authorList>
    </citation>
    <scope>NUCLEOTIDE SEQUENCE [LARGE SCALE GENOMIC DNA]</scope>
    <source>
        <strain>306</strain>
    </source>
</reference>
<comment type="function">
    <text evidence="1">Binds to the 23S rRNA.</text>
</comment>
<comment type="subunit">
    <text evidence="1">Part of the 50S ribosomal subunit.</text>
</comment>
<comment type="similarity">
    <text evidence="1">Belongs to the universal ribosomal protein uL15 family.</text>
</comment>
<keyword id="KW-0687">Ribonucleoprotein</keyword>
<keyword id="KW-0689">Ribosomal protein</keyword>
<keyword id="KW-0694">RNA-binding</keyword>
<keyword id="KW-0699">rRNA-binding</keyword>
<gene>
    <name evidence="1" type="primary">rplO</name>
    <name type="ordered locus">XAC0991</name>
</gene>
<name>RL15_XANAC</name>
<protein>
    <recommendedName>
        <fullName evidence="1">Large ribosomal subunit protein uL15</fullName>
    </recommendedName>
    <alternativeName>
        <fullName evidence="3">50S ribosomal protein L15</fullName>
    </alternativeName>
</protein>
<evidence type="ECO:0000255" key="1">
    <source>
        <dbReference type="HAMAP-Rule" id="MF_01341"/>
    </source>
</evidence>
<evidence type="ECO:0000256" key="2">
    <source>
        <dbReference type="SAM" id="MobiDB-lite"/>
    </source>
</evidence>
<evidence type="ECO:0000305" key="3"/>
<feature type="chain" id="PRO_0000251587" description="Large ribosomal subunit protein uL15">
    <location>
        <begin position="1"/>
        <end position="147"/>
    </location>
</feature>
<feature type="region of interest" description="Disordered" evidence="2">
    <location>
        <begin position="1"/>
        <end position="61"/>
    </location>
</feature>
<feature type="compositionally biased region" description="Basic and acidic residues" evidence="2">
    <location>
        <begin position="1"/>
        <end position="20"/>
    </location>
</feature>
<feature type="compositionally biased region" description="Gly residues" evidence="2">
    <location>
        <begin position="23"/>
        <end position="33"/>
    </location>
</feature>
<feature type="compositionally biased region" description="Basic residues" evidence="2">
    <location>
        <begin position="34"/>
        <end position="47"/>
    </location>
</feature>
<organism>
    <name type="scientific">Xanthomonas axonopodis pv. citri (strain 306)</name>
    <dbReference type="NCBI Taxonomy" id="190486"/>
    <lineage>
        <taxon>Bacteria</taxon>
        <taxon>Pseudomonadati</taxon>
        <taxon>Pseudomonadota</taxon>
        <taxon>Gammaproteobacteria</taxon>
        <taxon>Lysobacterales</taxon>
        <taxon>Lysobacteraceae</taxon>
        <taxon>Xanthomonas</taxon>
    </lineage>
</organism>
<accession>Q8PNQ9</accession>
<dbReference type="EMBL" id="AE008923">
    <property type="protein sequence ID" value="AAM35874.1"/>
    <property type="molecule type" value="Genomic_DNA"/>
</dbReference>
<dbReference type="RefSeq" id="WP_003486676.1">
    <property type="nucleotide sequence ID" value="NC_003919.1"/>
</dbReference>
<dbReference type="SMR" id="Q8PNQ9"/>
<dbReference type="GeneID" id="97210523"/>
<dbReference type="KEGG" id="xac:XAC0991"/>
<dbReference type="eggNOG" id="COG0200">
    <property type="taxonomic scope" value="Bacteria"/>
</dbReference>
<dbReference type="HOGENOM" id="CLU_055188_4_2_6"/>
<dbReference type="Proteomes" id="UP000000576">
    <property type="component" value="Chromosome"/>
</dbReference>
<dbReference type="GO" id="GO:0022625">
    <property type="term" value="C:cytosolic large ribosomal subunit"/>
    <property type="evidence" value="ECO:0007669"/>
    <property type="project" value="TreeGrafter"/>
</dbReference>
<dbReference type="GO" id="GO:0019843">
    <property type="term" value="F:rRNA binding"/>
    <property type="evidence" value="ECO:0007669"/>
    <property type="project" value="UniProtKB-UniRule"/>
</dbReference>
<dbReference type="GO" id="GO:0003735">
    <property type="term" value="F:structural constituent of ribosome"/>
    <property type="evidence" value="ECO:0007669"/>
    <property type="project" value="InterPro"/>
</dbReference>
<dbReference type="GO" id="GO:0006412">
    <property type="term" value="P:translation"/>
    <property type="evidence" value="ECO:0007669"/>
    <property type="project" value="UniProtKB-UniRule"/>
</dbReference>
<dbReference type="FunFam" id="3.100.10.10:FF:000008">
    <property type="entry name" value="50S ribosomal protein L15"/>
    <property type="match status" value="1"/>
</dbReference>
<dbReference type="Gene3D" id="3.100.10.10">
    <property type="match status" value="1"/>
</dbReference>
<dbReference type="HAMAP" id="MF_01341">
    <property type="entry name" value="Ribosomal_uL15"/>
    <property type="match status" value="1"/>
</dbReference>
<dbReference type="InterPro" id="IPR030878">
    <property type="entry name" value="Ribosomal_uL15"/>
</dbReference>
<dbReference type="InterPro" id="IPR021131">
    <property type="entry name" value="Ribosomal_uL15/eL18"/>
</dbReference>
<dbReference type="InterPro" id="IPR036227">
    <property type="entry name" value="Ribosomal_uL15/eL18_sf"/>
</dbReference>
<dbReference type="InterPro" id="IPR005749">
    <property type="entry name" value="Ribosomal_uL15_bac-type"/>
</dbReference>
<dbReference type="InterPro" id="IPR001196">
    <property type="entry name" value="Ribosomal_uL15_CS"/>
</dbReference>
<dbReference type="NCBIfam" id="TIGR01071">
    <property type="entry name" value="rplO_bact"/>
    <property type="match status" value="1"/>
</dbReference>
<dbReference type="PANTHER" id="PTHR12934">
    <property type="entry name" value="50S RIBOSOMAL PROTEIN L15"/>
    <property type="match status" value="1"/>
</dbReference>
<dbReference type="PANTHER" id="PTHR12934:SF11">
    <property type="entry name" value="LARGE RIBOSOMAL SUBUNIT PROTEIN UL15M"/>
    <property type="match status" value="1"/>
</dbReference>
<dbReference type="Pfam" id="PF00828">
    <property type="entry name" value="Ribosomal_L27A"/>
    <property type="match status" value="1"/>
</dbReference>
<dbReference type="SUPFAM" id="SSF52080">
    <property type="entry name" value="Ribosomal proteins L15p and L18e"/>
    <property type="match status" value="1"/>
</dbReference>
<dbReference type="PROSITE" id="PS00475">
    <property type="entry name" value="RIBOSOMAL_L15"/>
    <property type="match status" value="1"/>
</dbReference>
<proteinExistence type="inferred from homology"/>
<sequence>MTLRLNDLKPADGARTERTRVGRGIGSGLGKTAGRGHKGSFARKGGGKIKAGFEGGQTPMQRRLPKIGFRSKMARDTAEVLSYQLDKLDAGDVDFAALRAANLVPSRAKKAKIVLKGELSKKFVLKGVAATAGAKAAIEAAGGSVEE</sequence>